<organism>
    <name type="scientific">Brucella suis biovar 1 (strain 1330)</name>
    <dbReference type="NCBI Taxonomy" id="204722"/>
    <lineage>
        <taxon>Bacteria</taxon>
        <taxon>Pseudomonadati</taxon>
        <taxon>Pseudomonadota</taxon>
        <taxon>Alphaproteobacteria</taxon>
        <taxon>Hyphomicrobiales</taxon>
        <taxon>Brucellaceae</taxon>
        <taxon>Brucella/Ochrobactrum group</taxon>
        <taxon>Brucella</taxon>
    </lineage>
</organism>
<keyword id="KW-0066">ATP synthesis</keyword>
<keyword id="KW-0067">ATP-binding</keyword>
<keyword id="KW-0997">Cell inner membrane</keyword>
<keyword id="KW-1003">Cell membrane</keyword>
<keyword id="KW-0139">CF(1)</keyword>
<keyword id="KW-0375">Hydrogen ion transport</keyword>
<keyword id="KW-0406">Ion transport</keyword>
<keyword id="KW-0472">Membrane</keyword>
<keyword id="KW-0547">Nucleotide-binding</keyword>
<keyword id="KW-1278">Translocase</keyword>
<keyword id="KW-0813">Transport</keyword>
<proteinExistence type="inferred from homology"/>
<reference key="1">
    <citation type="journal article" date="2002" name="Proc. Natl. Acad. Sci. U.S.A.">
        <title>The Brucella suis genome reveals fundamental similarities between animal and plant pathogens and symbionts.</title>
        <authorList>
            <person name="Paulsen I.T."/>
            <person name="Seshadri R."/>
            <person name="Nelson K.E."/>
            <person name="Eisen J.A."/>
            <person name="Heidelberg J.F."/>
            <person name="Read T.D."/>
            <person name="Dodson R.J."/>
            <person name="Umayam L.A."/>
            <person name="Brinkac L.M."/>
            <person name="Beanan M.J."/>
            <person name="Daugherty S.C."/>
            <person name="DeBoy R.T."/>
            <person name="Durkin A.S."/>
            <person name="Kolonay J.F."/>
            <person name="Madupu R."/>
            <person name="Nelson W.C."/>
            <person name="Ayodeji B."/>
            <person name="Kraul M."/>
            <person name="Shetty J."/>
            <person name="Malek J.A."/>
            <person name="Van Aken S.E."/>
            <person name="Riedmuller S."/>
            <person name="Tettelin H."/>
            <person name="Gill S.R."/>
            <person name="White O."/>
            <person name="Salzberg S.L."/>
            <person name="Hoover D.L."/>
            <person name="Lindler L.E."/>
            <person name="Halling S.M."/>
            <person name="Boyle S.M."/>
            <person name="Fraser C.M."/>
        </authorList>
    </citation>
    <scope>NUCLEOTIDE SEQUENCE [LARGE SCALE GENOMIC DNA]</scope>
    <source>
        <strain>1330</strain>
    </source>
</reference>
<reference key="2">
    <citation type="journal article" date="2011" name="J. Bacteriol.">
        <title>Revised genome sequence of Brucella suis 1330.</title>
        <authorList>
            <person name="Tae H."/>
            <person name="Shallom S."/>
            <person name="Settlage R."/>
            <person name="Preston D."/>
            <person name="Adams L.G."/>
            <person name="Garner H.R."/>
        </authorList>
    </citation>
    <scope>NUCLEOTIDE SEQUENCE [LARGE SCALE GENOMIC DNA]</scope>
    <source>
        <strain>1330</strain>
    </source>
</reference>
<comment type="function">
    <text evidence="1">Produces ATP from ADP in the presence of a proton gradient across the membrane. The catalytic sites are hosted primarily by the beta subunits.</text>
</comment>
<comment type="catalytic activity">
    <reaction evidence="1">
        <text>ATP + H2O + 4 H(+)(in) = ADP + phosphate + 5 H(+)(out)</text>
        <dbReference type="Rhea" id="RHEA:57720"/>
        <dbReference type="ChEBI" id="CHEBI:15377"/>
        <dbReference type="ChEBI" id="CHEBI:15378"/>
        <dbReference type="ChEBI" id="CHEBI:30616"/>
        <dbReference type="ChEBI" id="CHEBI:43474"/>
        <dbReference type="ChEBI" id="CHEBI:456216"/>
        <dbReference type="EC" id="7.1.2.2"/>
    </reaction>
</comment>
<comment type="subunit">
    <text evidence="1">F-type ATPases have 2 components, CF(1) - the catalytic core - and CF(0) - the membrane proton channel. CF(1) has five subunits: alpha(3), beta(3), gamma(1), delta(1), epsilon(1). CF(0) has three main subunits: a(1), b(2) and c(9-12). The alpha and beta chains form an alternating ring which encloses part of the gamma chain. CF(1) is attached to CF(0) by a central stalk formed by the gamma and epsilon chains, while a peripheral stalk is formed by the delta and b chains.</text>
</comment>
<comment type="subcellular location">
    <subcellularLocation>
        <location evidence="1">Cell inner membrane</location>
        <topology evidence="1">Peripheral membrane protein</topology>
    </subcellularLocation>
</comment>
<comment type="similarity">
    <text evidence="1">Belongs to the ATPase alpha/beta chains family.</text>
</comment>
<gene>
    <name evidence="1" type="primary">atpD</name>
    <name type="ordered locus">BR1799</name>
    <name type="ordered locus">BS1330_I1793</name>
</gene>
<feature type="chain" id="PRO_0000254229" description="ATP synthase subunit beta">
    <location>
        <begin position="1"/>
        <end position="521"/>
    </location>
</feature>
<feature type="region of interest" description="Disordered" evidence="2">
    <location>
        <begin position="1"/>
        <end position="42"/>
    </location>
</feature>
<feature type="compositionally biased region" description="Low complexity" evidence="2">
    <location>
        <begin position="1"/>
        <end position="21"/>
    </location>
</feature>
<feature type="compositionally biased region" description="Low complexity" evidence="2">
    <location>
        <begin position="28"/>
        <end position="42"/>
    </location>
</feature>
<feature type="binding site" evidence="1">
    <location>
        <begin position="199"/>
        <end position="206"/>
    </location>
    <ligand>
        <name>ATP</name>
        <dbReference type="ChEBI" id="CHEBI:30616"/>
    </ligand>
</feature>
<protein>
    <recommendedName>
        <fullName evidence="1">ATP synthase subunit beta</fullName>
        <ecNumber evidence="1">7.1.2.2</ecNumber>
    </recommendedName>
    <alternativeName>
        <fullName evidence="1">ATP synthase F1 sector subunit beta</fullName>
    </alternativeName>
    <alternativeName>
        <fullName evidence="1">F-ATPase subunit beta</fullName>
    </alternativeName>
</protein>
<accession>Q8FYR5</accession>
<accession>G0K7D5</accession>
<name>ATPB_BRUSU</name>
<evidence type="ECO:0000255" key="1">
    <source>
        <dbReference type="HAMAP-Rule" id="MF_01347"/>
    </source>
</evidence>
<evidence type="ECO:0000256" key="2">
    <source>
        <dbReference type="SAM" id="MobiDB-lite"/>
    </source>
</evidence>
<sequence length="521" mass="54791">MAKAATPKTTAAAEAKPAAKAPAKKAAPKTTAAAKPAATKSGAPKAAAAGAIGHITQVIGAVVDVKFPEGQLPLILNALEVDNQGHRLVLEVAQHLGEDTVRTIAMDATEGLVRGQEARDTGEPIMVPVGVETLGRIMNVIGEPVDEAGPIKTKATRAIHQNAPEYIEQSTEAEILVTGIKVVDLLAPYAKGGKIGLFGGAGVGKTVLIMELINNVAKAHGGYSVFAGVGERTREGNDLYHEMIESGVNKLGGGEGSKAALVYGQMNEPPGARARVALSGLTVAENFRDQGQDVLFFVDNIFRFTQAGSEVSALLGRIPSAVGYQPTLATDMGAMQERITTTTKGSITSVQAIYVPADDLTDPAPATSFAHLDATTVLSRSIAEKGIYPAVDPLDSTSRMLDPKVVGEEHYAVARQVQSILQRYKALQDIIAILGMDELSEEDKLTVARARKIERFLSQPFFVAEVFTGSPGKLVDLADTIKGFKGLCAGDYDHLPEAAFYMVGSIEEALEKAKKLAAEAA</sequence>
<dbReference type="EC" id="7.1.2.2" evidence="1"/>
<dbReference type="EMBL" id="AE014291">
    <property type="protein sequence ID" value="AAN30694.1"/>
    <property type="molecule type" value="Genomic_DNA"/>
</dbReference>
<dbReference type="EMBL" id="CP002997">
    <property type="protein sequence ID" value="AEM19111.1"/>
    <property type="molecule type" value="Genomic_DNA"/>
</dbReference>
<dbReference type="PIR" id="AF3283">
    <property type="entry name" value="AF3283"/>
</dbReference>
<dbReference type="RefSeq" id="WP_004684261.1">
    <property type="nucleotide sequence ID" value="NZ_KN046804.1"/>
</dbReference>
<dbReference type="SMR" id="Q8FYR5"/>
<dbReference type="GeneID" id="97533076"/>
<dbReference type="KEGG" id="bms:BR1799"/>
<dbReference type="KEGG" id="bsi:BS1330_I1793"/>
<dbReference type="PATRIC" id="fig|204722.22.peg.60"/>
<dbReference type="HOGENOM" id="CLU_022398_0_2_5"/>
<dbReference type="PhylomeDB" id="Q8FYR5"/>
<dbReference type="Proteomes" id="UP000007104">
    <property type="component" value="Chromosome I"/>
</dbReference>
<dbReference type="GO" id="GO:0005886">
    <property type="term" value="C:plasma membrane"/>
    <property type="evidence" value="ECO:0007669"/>
    <property type="project" value="UniProtKB-SubCell"/>
</dbReference>
<dbReference type="GO" id="GO:0045259">
    <property type="term" value="C:proton-transporting ATP synthase complex"/>
    <property type="evidence" value="ECO:0007669"/>
    <property type="project" value="UniProtKB-KW"/>
</dbReference>
<dbReference type="GO" id="GO:0005524">
    <property type="term" value="F:ATP binding"/>
    <property type="evidence" value="ECO:0007669"/>
    <property type="project" value="UniProtKB-UniRule"/>
</dbReference>
<dbReference type="GO" id="GO:0016887">
    <property type="term" value="F:ATP hydrolysis activity"/>
    <property type="evidence" value="ECO:0007669"/>
    <property type="project" value="InterPro"/>
</dbReference>
<dbReference type="GO" id="GO:0046933">
    <property type="term" value="F:proton-transporting ATP synthase activity, rotational mechanism"/>
    <property type="evidence" value="ECO:0007669"/>
    <property type="project" value="UniProtKB-UniRule"/>
</dbReference>
<dbReference type="CDD" id="cd18110">
    <property type="entry name" value="ATP-synt_F1_beta_C"/>
    <property type="match status" value="1"/>
</dbReference>
<dbReference type="CDD" id="cd18115">
    <property type="entry name" value="ATP-synt_F1_beta_N"/>
    <property type="match status" value="1"/>
</dbReference>
<dbReference type="CDD" id="cd01133">
    <property type="entry name" value="F1-ATPase_beta_CD"/>
    <property type="match status" value="1"/>
</dbReference>
<dbReference type="FunFam" id="1.10.1140.10:FF:000001">
    <property type="entry name" value="ATP synthase subunit beta"/>
    <property type="match status" value="1"/>
</dbReference>
<dbReference type="FunFam" id="2.40.10.170:FF:000005">
    <property type="entry name" value="ATP synthase subunit beta"/>
    <property type="match status" value="1"/>
</dbReference>
<dbReference type="FunFam" id="3.40.50.300:FF:000026">
    <property type="entry name" value="ATP synthase subunit beta"/>
    <property type="match status" value="1"/>
</dbReference>
<dbReference type="Gene3D" id="2.40.10.170">
    <property type="match status" value="1"/>
</dbReference>
<dbReference type="Gene3D" id="1.10.1140.10">
    <property type="entry name" value="Bovine Mitochondrial F1-atpase, Atp Synthase Beta Chain, Chain D, domain 3"/>
    <property type="match status" value="1"/>
</dbReference>
<dbReference type="Gene3D" id="3.40.50.300">
    <property type="entry name" value="P-loop containing nucleotide triphosphate hydrolases"/>
    <property type="match status" value="1"/>
</dbReference>
<dbReference type="HAMAP" id="MF_01347">
    <property type="entry name" value="ATP_synth_beta_bact"/>
    <property type="match status" value="1"/>
</dbReference>
<dbReference type="InterPro" id="IPR003593">
    <property type="entry name" value="AAA+_ATPase"/>
</dbReference>
<dbReference type="InterPro" id="IPR055190">
    <property type="entry name" value="ATP-synt_VA_C"/>
</dbReference>
<dbReference type="InterPro" id="IPR005722">
    <property type="entry name" value="ATP_synth_F1_bsu"/>
</dbReference>
<dbReference type="InterPro" id="IPR020003">
    <property type="entry name" value="ATPase_a/bsu_AS"/>
</dbReference>
<dbReference type="InterPro" id="IPR050053">
    <property type="entry name" value="ATPase_alpha/beta_chains"/>
</dbReference>
<dbReference type="InterPro" id="IPR004100">
    <property type="entry name" value="ATPase_F1/V1/A1_a/bsu_N"/>
</dbReference>
<dbReference type="InterPro" id="IPR036121">
    <property type="entry name" value="ATPase_F1/V1/A1_a/bsu_N_sf"/>
</dbReference>
<dbReference type="InterPro" id="IPR000194">
    <property type="entry name" value="ATPase_F1/V1/A1_a/bsu_nucl-bd"/>
</dbReference>
<dbReference type="InterPro" id="IPR024034">
    <property type="entry name" value="ATPase_F1/V1_b/a_C"/>
</dbReference>
<dbReference type="InterPro" id="IPR027417">
    <property type="entry name" value="P-loop_NTPase"/>
</dbReference>
<dbReference type="NCBIfam" id="TIGR01039">
    <property type="entry name" value="atpD"/>
    <property type="match status" value="1"/>
</dbReference>
<dbReference type="PANTHER" id="PTHR15184">
    <property type="entry name" value="ATP SYNTHASE"/>
    <property type="match status" value="1"/>
</dbReference>
<dbReference type="PANTHER" id="PTHR15184:SF71">
    <property type="entry name" value="ATP SYNTHASE SUBUNIT BETA, MITOCHONDRIAL"/>
    <property type="match status" value="1"/>
</dbReference>
<dbReference type="Pfam" id="PF00006">
    <property type="entry name" value="ATP-synt_ab"/>
    <property type="match status" value="1"/>
</dbReference>
<dbReference type="Pfam" id="PF02874">
    <property type="entry name" value="ATP-synt_ab_N"/>
    <property type="match status" value="1"/>
</dbReference>
<dbReference type="Pfam" id="PF22919">
    <property type="entry name" value="ATP-synt_VA_C"/>
    <property type="match status" value="1"/>
</dbReference>
<dbReference type="PIRSF" id="PIRSF039072">
    <property type="entry name" value="ATPase_subunit_beta"/>
    <property type="match status" value="1"/>
</dbReference>
<dbReference type="SMART" id="SM00382">
    <property type="entry name" value="AAA"/>
    <property type="match status" value="1"/>
</dbReference>
<dbReference type="SUPFAM" id="SSF47917">
    <property type="entry name" value="C-terminal domain of alpha and beta subunits of F1 ATP synthase"/>
    <property type="match status" value="1"/>
</dbReference>
<dbReference type="SUPFAM" id="SSF50615">
    <property type="entry name" value="N-terminal domain of alpha and beta subunits of F1 ATP synthase"/>
    <property type="match status" value="1"/>
</dbReference>
<dbReference type="SUPFAM" id="SSF52540">
    <property type="entry name" value="P-loop containing nucleoside triphosphate hydrolases"/>
    <property type="match status" value="1"/>
</dbReference>
<dbReference type="PROSITE" id="PS00152">
    <property type="entry name" value="ATPASE_ALPHA_BETA"/>
    <property type="match status" value="1"/>
</dbReference>